<feature type="chain" id="PRO_0000261044" description="Ribose import ATP-binding protein RbsA 1">
    <location>
        <begin position="1"/>
        <end position="517"/>
    </location>
</feature>
<feature type="domain" description="ABC transporter 1" evidence="1">
    <location>
        <begin position="11"/>
        <end position="251"/>
    </location>
</feature>
<feature type="domain" description="ABC transporter 2" evidence="1">
    <location>
        <begin position="263"/>
        <end position="507"/>
    </location>
</feature>
<feature type="binding site" evidence="1">
    <location>
        <begin position="43"/>
        <end position="50"/>
    </location>
    <ligand>
        <name>ATP</name>
        <dbReference type="ChEBI" id="CHEBI:30616"/>
    </ligand>
</feature>
<comment type="function">
    <text evidence="1">Part of the ABC transporter complex RbsABC involved in ribose import. Responsible for energy coupling to the transport system.</text>
</comment>
<comment type="catalytic activity">
    <reaction evidence="1">
        <text>D-ribose(out) + ATP + H2O = D-ribose(in) + ADP + phosphate + H(+)</text>
        <dbReference type="Rhea" id="RHEA:29903"/>
        <dbReference type="ChEBI" id="CHEBI:15377"/>
        <dbReference type="ChEBI" id="CHEBI:15378"/>
        <dbReference type="ChEBI" id="CHEBI:30616"/>
        <dbReference type="ChEBI" id="CHEBI:43474"/>
        <dbReference type="ChEBI" id="CHEBI:47013"/>
        <dbReference type="ChEBI" id="CHEBI:456216"/>
        <dbReference type="EC" id="7.5.2.7"/>
    </reaction>
</comment>
<comment type="subunit">
    <text evidence="1">The complex is composed of an ATP-binding protein (RbsA), two transmembrane proteins (RbsC) and a solute-binding protein (RbsB).</text>
</comment>
<comment type="subcellular location">
    <subcellularLocation>
        <location evidence="1">Cell inner membrane</location>
        <topology evidence="1">Peripheral membrane protein</topology>
    </subcellularLocation>
</comment>
<comment type="similarity">
    <text evidence="1">Belongs to the ABC transporter superfamily. Ribose importer (TC 3.A.1.2.1) family.</text>
</comment>
<protein>
    <recommendedName>
        <fullName evidence="1">Ribose import ATP-binding protein RbsA 1</fullName>
        <ecNumber evidence="1">7.5.2.7</ecNumber>
    </recommendedName>
</protein>
<accession>Q1BWN5</accession>
<sequence>MSRSESPRPLLEMRGISKTFPAVRALDNVSLTVYPGEIHSLMGENGAGKSTLMKILSGAYRADAGGEILIDGQRIEIDGPLAARDAGVAVIYQELCLSPNLTVAENIYVGRELRRGNRRWGTIDRAAMARGCQDVLARLGAPFGPDTLVDTLSIAEQQLVEIARAVHTRARILVMDEPTTPLSSRETEHLFRLIRQLREEGLAIIYISHRMAEIYELSDRVSVLRDGAYVGTLERASLSAERLVAMMVGRDISGFYKKEHAPYDPGHLLLSVRDIADGTRVRGCSLDLHAGEVLGIAGLVGAGRTELARLIFGAEPRVRGDVKLGERTFGAHSPRDAIDAGLVYLTEDRKRQGLFLDMSVRDNINISVCNRDARLGALDLARGAERARDAIASLSIRVPHANVNVGALSGGNQQKVLLSRLLETKPRVLILDEPTRGVDIGAKSEIYRIINELARAGVGVIVISSELPEIIGVADRVLVMREGEIAGELGGHTHTPITQEAIIALATGSQAELADAH</sequence>
<reference key="1">
    <citation type="submission" date="2006-05" db="EMBL/GenBank/DDBJ databases">
        <title>Complete sequence of chromosome 1 of Burkholderia cenocepacia AU 1054.</title>
        <authorList>
            <consortium name="US DOE Joint Genome Institute"/>
            <person name="Copeland A."/>
            <person name="Lucas S."/>
            <person name="Lapidus A."/>
            <person name="Barry K."/>
            <person name="Detter J.C."/>
            <person name="Glavina del Rio T."/>
            <person name="Hammon N."/>
            <person name="Israni S."/>
            <person name="Dalin E."/>
            <person name="Tice H."/>
            <person name="Pitluck S."/>
            <person name="Chain P."/>
            <person name="Malfatti S."/>
            <person name="Shin M."/>
            <person name="Vergez L."/>
            <person name="Schmutz J."/>
            <person name="Larimer F."/>
            <person name="Land M."/>
            <person name="Hauser L."/>
            <person name="Kyrpides N."/>
            <person name="Lykidis A."/>
            <person name="LiPuma J.J."/>
            <person name="Konstantinidis K."/>
            <person name="Tiedje J.M."/>
            <person name="Richardson P."/>
        </authorList>
    </citation>
    <scope>NUCLEOTIDE SEQUENCE [LARGE SCALE GENOMIC DNA]</scope>
    <source>
        <strain>AU 1054</strain>
    </source>
</reference>
<dbReference type="EC" id="7.5.2.7" evidence="1"/>
<dbReference type="EMBL" id="CP000378">
    <property type="protein sequence ID" value="ABF75970.1"/>
    <property type="molecule type" value="Genomic_DNA"/>
</dbReference>
<dbReference type="SMR" id="Q1BWN5"/>
<dbReference type="HOGENOM" id="CLU_000604_92_3_4"/>
<dbReference type="GO" id="GO:0005886">
    <property type="term" value="C:plasma membrane"/>
    <property type="evidence" value="ECO:0007669"/>
    <property type="project" value="UniProtKB-SubCell"/>
</dbReference>
<dbReference type="GO" id="GO:0015611">
    <property type="term" value="F:ABC-type D-ribose transporter activity"/>
    <property type="evidence" value="ECO:0007669"/>
    <property type="project" value="UniProtKB-EC"/>
</dbReference>
<dbReference type="GO" id="GO:0005524">
    <property type="term" value="F:ATP binding"/>
    <property type="evidence" value="ECO:0007669"/>
    <property type="project" value="UniProtKB-KW"/>
</dbReference>
<dbReference type="GO" id="GO:0016887">
    <property type="term" value="F:ATP hydrolysis activity"/>
    <property type="evidence" value="ECO:0007669"/>
    <property type="project" value="InterPro"/>
</dbReference>
<dbReference type="CDD" id="cd03216">
    <property type="entry name" value="ABC_Carb_Monos_I"/>
    <property type="match status" value="1"/>
</dbReference>
<dbReference type="CDD" id="cd03215">
    <property type="entry name" value="ABC_Carb_Monos_II"/>
    <property type="match status" value="1"/>
</dbReference>
<dbReference type="FunFam" id="3.40.50.300:FF:000127">
    <property type="entry name" value="Ribose import ATP-binding protein RbsA"/>
    <property type="match status" value="1"/>
</dbReference>
<dbReference type="Gene3D" id="3.40.50.300">
    <property type="entry name" value="P-loop containing nucleotide triphosphate hydrolases"/>
    <property type="match status" value="2"/>
</dbReference>
<dbReference type="InterPro" id="IPR003593">
    <property type="entry name" value="AAA+_ATPase"/>
</dbReference>
<dbReference type="InterPro" id="IPR050107">
    <property type="entry name" value="ABC_carbohydrate_import_ATPase"/>
</dbReference>
<dbReference type="InterPro" id="IPR003439">
    <property type="entry name" value="ABC_transporter-like_ATP-bd"/>
</dbReference>
<dbReference type="InterPro" id="IPR017871">
    <property type="entry name" value="ABC_transporter-like_CS"/>
</dbReference>
<dbReference type="InterPro" id="IPR027417">
    <property type="entry name" value="P-loop_NTPase"/>
</dbReference>
<dbReference type="PANTHER" id="PTHR43790">
    <property type="entry name" value="CARBOHYDRATE TRANSPORT ATP-BINDING PROTEIN MG119-RELATED"/>
    <property type="match status" value="1"/>
</dbReference>
<dbReference type="PANTHER" id="PTHR43790:SF3">
    <property type="entry name" value="D-ALLOSE IMPORT ATP-BINDING PROTEIN ALSA-RELATED"/>
    <property type="match status" value="1"/>
</dbReference>
<dbReference type="Pfam" id="PF00005">
    <property type="entry name" value="ABC_tran"/>
    <property type="match status" value="2"/>
</dbReference>
<dbReference type="SMART" id="SM00382">
    <property type="entry name" value="AAA"/>
    <property type="match status" value="2"/>
</dbReference>
<dbReference type="SUPFAM" id="SSF52540">
    <property type="entry name" value="P-loop containing nucleoside triphosphate hydrolases"/>
    <property type="match status" value="2"/>
</dbReference>
<dbReference type="PROSITE" id="PS00211">
    <property type="entry name" value="ABC_TRANSPORTER_1"/>
    <property type="match status" value="1"/>
</dbReference>
<dbReference type="PROSITE" id="PS50893">
    <property type="entry name" value="ABC_TRANSPORTER_2"/>
    <property type="match status" value="2"/>
</dbReference>
<dbReference type="PROSITE" id="PS51254">
    <property type="entry name" value="RBSA"/>
    <property type="match status" value="1"/>
</dbReference>
<gene>
    <name evidence="1" type="primary">rbsA1</name>
    <name type="ordered locus">Bcen_1063</name>
</gene>
<organism>
    <name type="scientific">Burkholderia orbicola (strain AU 1054)</name>
    <dbReference type="NCBI Taxonomy" id="331271"/>
    <lineage>
        <taxon>Bacteria</taxon>
        <taxon>Pseudomonadati</taxon>
        <taxon>Pseudomonadota</taxon>
        <taxon>Betaproteobacteria</taxon>
        <taxon>Burkholderiales</taxon>
        <taxon>Burkholderiaceae</taxon>
        <taxon>Burkholderia</taxon>
        <taxon>Burkholderia cepacia complex</taxon>
        <taxon>Burkholderia orbicola</taxon>
    </lineage>
</organism>
<evidence type="ECO:0000255" key="1">
    <source>
        <dbReference type="HAMAP-Rule" id="MF_01716"/>
    </source>
</evidence>
<keyword id="KW-0067">ATP-binding</keyword>
<keyword id="KW-0997">Cell inner membrane</keyword>
<keyword id="KW-1003">Cell membrane</keyword>
<keyword id="KW-0472">Membrane</keyword>
<keyword id="KW-0547">Nucleotide-binding</keyword>
<keyword id="KW-0677">Repeat</keyword>
<keyword id="KW-0762">Sugar transport</keyword>
<keyword id="KW-1278">Translocase</keyword>
<keyword id="KW-0813">Transport</keyword>
<name>RBSA1_BURO1</name>
<proteinExistence type="inferred from homology"/>